<proteinExistence type="inferred from homology"/>
<keyword id="KW-0021">Allosteric enzyme</keyword>
<keyword id="KW-0119">Carbohydrate metabolism</keyword>
<keyword id="KW-1015">Disulfide bond</keyword>
<keyword id="KW-0378">Hydrolase</keyword>
<keyword id="KW-1185">Reference proteome</keyword>
<name>NAGB_ECO24</name>
<reference key="1">
    <citation type="journal article" date="2008" name="J. Bacteriol.">
        <title>The pangenome structure of Escherichia coli: comparative genomic analysis of E. coli commensal and pathogenic isolates.</title>
        <authorList>
            <person name="Rasko D.A."/>
            <person name="Rosovitz M.J."/>
            <person name="Myers G.S.A."/>
            <person name="Mongodin E.F."/>
            <person name="Fricke W.F."/>
            <person name="Gajer P."/>
            <person name="Crabtree J."/>
            <person name="Sebaihia M."/>
            <person name="Thomson N.R."/>
            <person name="Chaudhuri R."/>
            <person name="Henderson I.R."/>
            <person name="Sperandio V."/>
            <person name="Ravel J."/>
        </authorList>
    </citation>
    <scope>NUCLEOTIDE SEQUENCE [LARGE SCALE GENOMIC DNA]</scope>
    <source>
        <strain>E24377A / ETEC</strain>
    </source>
</reference>
<sequence length="266" mass="29774">MRLIPLTTAEQVGKWAARHIVNRINAFKPTADRPFVLGLPTGGTPMTTYKALVEMHKAGQVSFKHVVTFNMDEYVGLPKEHPESYYSFMHRNFFDHVDIPAENINLLNGNAPDIDAECRQYEEKIRSYGKIHLFMGGVGNDGHIAFNEPASSLASRTRIKTLTHDTRVANSRFFDNDVNQVPKYALTVGVGTLLDAEEVMILVLGSQKALALQAAVEGCVNHMWTISCLQLHPKAIMVCDEPSTMELKVKTLRYFNELEAENIKGL</sequence>
<organism>
    <name type="scientific">Escherichia coli O139:H28 (strain E24377A / ETEC)</name>
    <dbReference type="NCBI Taxonomy" id="331111"/>
    <lineage>
        <taxon>Bacteria</taxon>
        <taxon>Pseudomonadati</taxon>
        <taxon>Pseudomonadota</taxon>
        <taxon>Gammaproteobacteria</taxon>
        <taxon>Enterobacterales</taxon>
        <taxon>Enterobacteriaceae</taxon>
        <taxon>Escherichia</taxon>
    </lineage>
</organism>
<feature type="chain" id="PRO_1000066977" description="Glucosamine-6-phosphate deaminase">
    <location>
        <begin position="1"/>
        <end position="266"/>
    </location>
</feature>
<feature type="active site" description="Proton acceptor; for enolization step" evidence="1">
    <location>
        <position position="72"/>
    </location>
</feature>
<feature type="active site" description="For ring-opening step" evidence="1">
    <location>
        <position position="141"/>
    </location>
</feature>
<feature type="active site" description="Proton acceptor; for ring-opening step" evidence="1">
    <location>
        <position position="143"/>
    </location>
</feature>
<feature type="active site" description="For ring-opening step" evidence="1">
    <location>
        <position position="148"/>
    </location>
</feature>
<feature type="site" description="Part of the allosteric site" evidence="1">
    <location>
        <position position="151"/>
    </location>
</feature>
<feature type="site" description="Part of the allosteric site" evidence="1">
    <location>
        <position position="158"/>
    </location>
</feature>
<feature type="site" description="Part of the allosteric site" evidence="1">
    <location>
        <position position="160"/>
    </location>
</feature>
<feature type="site" description="Part of the allosteric site" evidence="1">
    <location>
        <position position="161"/>
    </location>
</feature>
<feature type="site" description="Part of the allosteric site" evidence="1">
    <location>
        <position position="254"/>
    </location>
</feature>
<feature type="disulfide bond" description="Interchain" evidence="1">
    <location>
        <position position="219"/>
    </location>
</feature>
<protein>
    <recommendedName>
        <fullName evidence="1">Glucosamine-6-phosphate deaminase</fullName>
        <ecNumber evidence="1">3.5.99.6</ecNumber>
    </recommendedName>
    <alternativeName>
        <fullName evidence="1">GlcN6P deaminase</fullName>
        <shortName evidence="1">GNPDA</shortName>
    </alternativeName>
    <alternativeName>
        <fullName evidence="1">Glucosamine-6-phosphate isomerase</fullName>
    </alternativeName>
</protein>
<comment type="function">
    <text evidence="1">Catalyzes the reversible isomerization-deamination of glucosamine 6-phosphate (GlcN6P) to form fructose 6-phosphate (Fru6P) and ammonium ion.</text>
</comment>
<comment type="catalytic activity">
    <reaction evidence="1">
        <text>alpha-D-glucosamine 6-phosphate + H2O = beta-D-fructose 6-phosphate + NH4(+)</text>
        <dbReference type="Rhea" id="RHEA:12172"/>
        <dbReference type="ChEBI" id="CHEBI:15377"/>
        <dbReference type="ChEBI" id="CHEBI:28938"/>
        <dbReference type="ChEBI" id="CHEBI:57634"/>
        <dbReference type="ChEBI" id="CHEBI:75989"/>
        <dbReference type="EC" id="3.5.99.6"/>
    </reaction>
</comment>
<comment type="activity regulation">
    <text evidence="1">Allosterically activated by N-acetylglucosamine 6-phosphate (GlcNAc6P).</text>
</comment>
<comment type="pathway">
    <text evidence="1">Amino-sugar metabolism; N-acetylneuraminate degradation; D-fructose 6-phosphate from N-acetylneuraminate: step 5/5.</text>
</comment>
<comment type="subunit">
    <text evidence="1">Homohexamer; trimer of disulfide-linked dimers.</text>
</comment>
<comment type="similarity">
    <text evidence="1">Belongs to the glucosamine/galactosamine-6-phosphate isomerase family. NagB subfamily.</text>
</comment>
<accession>A7ZJ60</accession>
<evidence type="ECO:0000255" key="1">
    <source>
        <dbReference type="HAMAP-Rule" id="MF_01241"/>
    </source>
</evidence>
<gene>
    <name evidence="1" type="primary">nagB</name>
    <name type="ordered locus">EcE24377A_0703</name>
</gene>
<dbReference type="EC" id="3.5.99.6" evidence="1"/>
<dbReference type="EMBL" id="CP000800">
    <property type="protein sequence ID" value="ABV20890.1"/>
    <property type="molecule type" value="Genomic_DNA"/>
</dbReference>
<dbReference type="RefSeq" id="WP_001237072.1">
    <property type="nucleotide sequence ID" value="NC_009801.1"/>
</dbReference>
<dbReference type="SMR" id="A7ZJ60"/>
<dbReference type="GeneID" id="93776807"/>
<dbReference type="KEGG" id="ecw:EcE24377A_0703"/>
<dbReference type="HOGENOM" id="CLU_049611_0_1_6"/>
<dbReference type="UniPathway" id="UPA00629">
    <property type="reaction ID" value="UER00684"/>
</dbReference>
<dbReference type="Proteomes" id="UP000001122">
    <property type="component" value="Chromosome"/>
</dbReference>
<dbReference type="GO" id="GO:0005829">
    <property type="term" value="C:cytosol"/>
    <property type="evidence" value="ECO:0007669"/>
    <property type="project" value="TreeGrafter"/>
</dbReference>
<dbReference type="GO" id="GO:0004342">
    <property type="term" value="F:glucosamine-6-phosphate deaminase activity"/>
    <property type="evidence" value="ECO:0007669"/>
    <property type="project" value="UniProtKB-UniRule"/>
</dbReference>
<dbReference type="GO" id="GO:0042802">
    <property type="term" value="F:identical protein binding"/>
    <property type="evidence" value="ECO:0007669"/>
    <property type="project" value="TreeGrafter"/>
</dbReference>
<dbReference type="GO" id="GO:0005975">
    <property type="term" value="P:carbohydrate metabolic process"/>
    <property type="evidence" value="ECO:0007669"/>
    <property type="project" value="InterPro"/>
</dbReference>
<dbReference type="GO" id="GO:0006043">
    <property type="term" value="P:glucosamine catabolic process"/>
    <property type="evidence" value="ECO:0007669"/>
    <property type="project" value="TreeGrafter"/>
</dbReference>
<dbReference type="GO" id="GO:0006046">
    <property type="term" value="P:N-acetylglucosamine catabolic process"/>
    <property type="evidence" value="ECO:0007669"/>
    <property type="project" value="TreeGrafter"/>
</dbReference>
<dbReference type="GO" id="GO:0019262">
    <property type="term" value="P:N-acetylneuraminate catabolic process"/>
    <property type="evidence" value="ECO:0007669"/>
    <property type="project" value="UniProtKB-UniRule"/>
</dbReference>
<dbReference type="CDD" id="cd01399">
    <property type="entry name" value="GlcN6P_deaminase"/>
    <property type="match status" value="1"/>
</dbReference>
<dbReference type="FunFam" id="3.40.50.1360:FF:000002">
    <property type="entry name" value="Glucosamine-6-phosphate deaminase"/>
    <property type="match status" value="1"/>
</dbReference>
<dbReference type="Gene3D" id="3.40.50.1360">
    <property type="match status" value="1"/>
</dbReference>
<dbReference type="HAMAP" id="MF_01241">
    <property type="entry name" value="GlcN6P_deamin"/>
    <property type="match status" value="1"/>
</dbReference>
<dbReference type="InterPro" id="IPR006148">
    <property type="entry name" value="Glc/Gal-6P_isomerase"/>
</dbReference>
<dbReference type="InterPro" id="IPR004547">
    <property type="entry name" value="Glucosamine6P_isomerase"/>
</dbReference>
<dbReference type="InterPro" id="IPR018321">
    <property type="entry name" value="Glucosamine6P_isomerase_CS"/>
</dbReference>
<dbReference type="InterPro" id="IPR037171">
    <property type="entry name" value="NagB/RpiA_transferase-like"/>
</dbReference>
<dbReference type="NCBIfam" id="TIGR00502">
    <property type="entry name" value="nagB"/>
    <property type="match status" value="1"/>
</dbReference>
<dbReference type="NCBIfam" id="NF001685">
    <property type="entry name" value="PRK00443.1-5"/>
    <property type="match status" value="1"/>
</dbReference>
<dbReference type="PANTHER" id="PTHR11280">
    <property type="entry name" value="GLUCOSAMINE-6-PHOSPHATE ISOMERASE"/>
    <property type="match status" value="1"/>
</dbReference>
<dbReference type="PANTHER" id="PTHR11280:SF5">
    <property type="entry name" value="GLUCOSAMINE-6-PHOSPHATE ISOMERASE"/>
    <property type="match status" value="1"/>
</dbReference>
<dbReference type="Pfam" id="PF01182">
    <property type="entry name" value="Glucosamine_iso"/>
    <property type="match status" value="1"/>
</dbReference>
<dbReference type="SUPFAM" id="SSF100950">
    <property type="entry name" value="NagB/RpiA/CoA transferase-like"/>
    <property type="match status" value="1"/>
</dbReference>
<dbReference type="PROSITE" id="PS01161">
    <property type="entry name" value="GLC_GALNAC_ISOMERASE"/>
    <property type="match status" value="1"/>
</dbReference>